<comment type="function">
    <text evidence="1 2">Acts as a component of the essential kinetochore-associated Ndc80 complex, which is required for chromosome segregation and spindle checkpoint activity during meiosis and mitosis. Required for kinetochore integrity and the organization of stable microtubule binding sites in the outer plate of the kinetochore. Participates in SAC signaling that responds specifically to disruptions in spindle microtubule dynamics. The NDC80 complex synergistically enhances the affinity of the SKA1 complex for microtubules and may allow the NDC80 complex to track depolymerizing microtubules.</text>
</comment>
<comment type="subunit">
    <text evidence="2">Component of the Ndc80 complex, which is composed of Ndc80, Nuf2 and Spc25.</text>
</comment>
<comment type="subcellular location">
    <subcellularLocation>
        <location evidence="2">Nucleus</location>
    </subcellularLocation>
    <subcellularLocation>
        <location evidence="2">Chromosome</location>
        <location evidence="2">Centromere</location>
        <location evidence="2">Kinetochore</location>
    </subcellularLocation>
</comment>
<comment type="similarity">
    <text evidence="3">Belongs to the SPC25 family.</text>
</comment>
<name>SPC25_DROEU</name>
<sequence length="221" mass="25327">MAITTAESSYEKRIKALFDKQVQMEAREASVIKKVFKFNSNLLDVKEAVVHHHRDVEKLQKVVIQRREEMEKRVSFMEELAQEVEATKQRNLVMREQIKQQKMLVRQRKNEIMESIHTLSKATGTYINREALPARVKGVTVLHGDNRDELIPFDLKATDVEGLDSLCQHLHSLNIDVSQWQQLVSLATEMSMKSHPATPPKDAAKCKSIIEIDLTSPTIQA</sequence>
<accession>Q64EW0</accession>
<evidence type="ECO:0000250" key="1">
    <source>
        <dbReference type="UniProtKB" id="Q9HBM1"/>
    </source>
</evidence>
<evidence type="ECO:0000250" key="2">
    <source>
        <dbReference type="UniProtKB" id="Q9V3V7"/>
    </source>
</evidence>
<evidence type="ECO:0000255" key="3"/>
<evidence type="ECO:0000312" key="4">
    <source>
        <dbReference type="EMBL" id="AAU15007.1"/>
    </source>
</evidence>
<reference evidence="4" key="1">
    <citation type="journal article" date="2007" name="J. Cell Sci.">
        <title>Mitch a rapidly evolving component of the Ndc80 kinetochore complex required for correct chromosome segregation in Drosophila.</title>
        <authorList>
            <person name="Williams B."/>
            <person name="Leung G."/>
            <person name="Maiato H."/>
            <person name="Wong A."/>
            <person name="Li Z."/>
            <person name="Williams E.V."/>
            <person name="Kirkpatrick C."/>
            <person name="Aquadro C.F."/>
            <person name="Rieder C.L."/>
            <person name="Goldberg M.L."/>
        </authorList>
    </citation>
    <scope>NUCLEOTIDE SEQUENCE [GENOMIC DNA]</scope>
</reference>
<proteinExistence type="inferred from homology"/>
<organism>
    <name type="scientific">Drosophila eugracilis</name>
    <name type="common">Fruit fly</name>
    <dbReference type="NCBI Taxonomy" id="29029"/>
    <lineage>
        <taxon>Eukaryota</taxon>
        <taxon>Metazoa</taxon>
        <taxon>Ecdysozoa</taxon>
        <taxon>Arthropoda</taxon>
        <taxon>Hexapoda</taxon>
        <taxon>Insecta</taxon>
        <taxon>Pterygota</taxon>
        <taxon>Neoptera</taxon>
        <taxon>Endopterygota</taxon>
        <taxon>Diptera</taxon>
        <taxon>Brachycera</taxon>
        <taxon>Muscomorpha</taxon>
        <taxon>Ephydroidea</taxon>
        <taxon>Drosophilidae</taxon>
        <taxon>Drosophila</taxon>
        <taxon>Sophophora</taxon>
    </lineage>
</organism>
<feature type="chain" id="PRO_0000392416" description="Kinetochore protein Spc25">
    <location>
        <begin position="1"/>
        <end position="221"/>
    </location>
</feature>
<feature type="coiled-coil region" evidence="3">
    <location>
        <begin position="63"/>
        <end position="114"/>
    </location>
</feature>
<keyword id="KW-0131">Cell cycle</keyword>
<keyword id="KW-0132">Cell division</keyword>
<keyword id="KW-0137">Centromere</keyword>
<keyword id="KW-0158">Chromosome</keyword>
<keyword id="KW-0175">Coiled coil</keyword>
<keyword id="KW-0995">Kinetochore</keyword>
<keyword id="KW-0469">Meiosis</keyword>
<keyword id="KW-0498">Mitosis</keyword>
<keyword id="KW-0539">Nucleus</keyword>
<dbReference type="EMBL" id="AY714313">
    <property type="protein sequence ID" value="AAU15007.1"/>
    <property type="molecule type" value="Genomic_DNA"/>
</dbReference>
<dbReference type="SMR" id="Q64EW0"/>
<dbReference type="OrthoDB" id="8006210at2759"/>
<dbReference type="GO" id="GO:0031262">
    <property type="term" value="C:Ndc80 complex"/>
    <property type="evidence" value="ECO:0000250"/>
    <property type="project" value="UniProtKB"/>
</dbReference>
<dbReference type="GO" id="GO:0005634">
    <property type="term" value="C:nucleus"/>
    <property type="evidence" value="ECO:0007669"/>
    <property type="project" value="UniProtKB-SubCell"/>
</dbReference>
<dbReference type="GO" id="GO:0051301">
    <property type="term" value="P:cell division"/>
    <property type="evidence" value="ECO:0007669"/>
    <property type="project" value="UniProtKB-KW"/>
</dbReference>
<dbReference type="GO" id="GO:0051311">
    <property type="term" value="P:meiotic metaphase chromosome alignment"/>
    <property type="evidence" value="ECO:0000250"/>
    <property type="project" value="UniProtKB"/>
</dbReference>
<dbReference type="GO" id="GO:0000212">
    <property type="term" value="P:meiotic spindle organization"/>
    <property type="evidence" value="ECO:0000250"/>
    <property type="project" value="UniProtKB"/>
</dbReference>
<dbReference type="GO" id="GO:0007080">
    <property type="term" value="P:mitotic metaphase chromosome alignment"/>
    <property type="evidence" value="ECO:0000250"/>
    <property type="project" value="UniProtKB"/>
</dbReference>
<gene>
    <name evidence="2" type="primary">Spc25</name>
    <name evidence="4" type="synonym">mitch</name>
</gene>
<protein>
    <recommendedName>
        <fullName evidence="2">Kinetochore protein Spc25</fullName>
    </recommendedName>
</protein>